<keyword id="KW-0997">Cell inner membrane</keyword>
<keyword id="KW-1003">Cell membrane</keyword>
<keyword id="KW-0472">Membrane</keyword>
<keyword id="KW-0520">NAD</keyword>
<keyword id="KW-0874">Quinone</keyword>
<keyword id="KW-1278">Translocase</keyword>
<keyword id="KW-0812">Transmembrane</keyword>
<keyword id="KW-1133">Transmembrane helix</keyword>
<keyword id="KW-0813">Transport</keyword>
<keyword id="KW-0830">Ubiquinone</keyword>
<name>NUOK_LEGPC</name>
<accession>A5IHV3</accession>
<proteinExistence type="inferred from homology"/>
<feature type="chain" id="PRO_0000390103" description="NADH-quinone oxidoreductase subunit K">
    <location>
        <begin position="1"/>
        <end position="101"/>
    </location>
</feature>
<feature type="transmembrane region" description="Helical" evidence="1">
    <location>
        <begin position="4"/>
        <end position="24"/>
    </location>
</feature>
<feature type="transmembrane region" description="Helical" evidence="1">
    <location>
        <begin position="29"/>
        <end position="49"/>
    </location>
</feature>
<feature type="transmembrane region" description="Helical" evidence="1">
    <location>
        <begin position="61"/>
        <end position="81"/>
    </location>
</feature>
<protein>
    <recommendedName>
        <fullName evidence="1">NADH-quinone oxidoreductase subunit K</fullName>
        <ecNumber evidence="1">7.1.1.-</ecNumber>
    </recommendedName>
    <alternativeName>
        <fullName evidence="1">NADH dehydrogenase I subunit K</fullName>
    </alternativeName>
    <alternativeName>
        <fullName evidence="1">NDH-1 subunit K</fullName>
    </alternativeName>
</protein>
<dbReference type="EC" id="7.1.1.-" evidence="1"/>
<dbReference type="EMBL" id="CP000675">
    <property type="protein sequence ID" value="ABQ56953.1"/>
    <property type="molecule type" value="Genomic_DNA"/>
</dbReference>
<dbReference type="RefSeq" id="WP_010948468.1">
    <property type="nucleotide sequence ID" value="NZ_JAPMSS010000004.1"/>
</dbReference>
<dbReference type="SMR" id="A5IHV3"/>
<dbReference type="GeneID" id="57036777"/>
<dbReference type="KEGG" id="lpc:LPC_3065"/>
<dbReference type="HOGENOM" id="CLU_144724_2_0_6"/>
<dbReference type="GO" id="GO:0030964">
    <property type="term" value="C:NADH dehydrogenase complex"/>
    <property type="evidence" value="ECO:0007669"/>
    <property type="project" value="TreeGrafter"/>
</dbReference>
<dbReference type="GO" id="GO:0005886">
    <property type="term" value="C:plasma membrane"/>
    <property type="evidence" value="ECO:0007669"/>
    <property type="project" value="UniProtKB-SubCell"/>
</dbReference>
<dbReference type="GO" id="GO:0050136">
    <property type="term" value="F:NADH:ubiquinone reductase (non-electrogenic) activity"/>
    <property type="evidence" value="ECO:0007669"/>
    <property type="project" value="UniProtKB-UniRule"/>
</dbReference>
<dbReference type="GO" id="GO:0048038">
    <property type="term" value="F:quinone binding"/>
    <property type="evidence" value="ECO:0007669"/>
    <property type="project" value="UniProtKB-KW"/>
</dbReference>
<dbReference type="GO" id="GO:0042773">
    <property type="term" value="P:ATP synthesis coupled electron transport"/>
    <property type="evidence" value="ECO:0007669"/>
    <property type="project" value="InterPro"/>
</dbReference>
<dbReference type="FunFam" id="1.10.287.3510:FF:000001">
    <property type="entry name" value="NADH-quinone oxidoreductase subunit K"/>
    <property type="match status" value="1"/>
</dbReference>
<dbReference type="Gene3D" id="1.10.287.3510">
    <property type="match status" value="1"/>
</dbReference>
<dbReference type="HAMAP" id="MF_01456">
    <property type="entry name" value="NDH1_NuoK"/>
    <property type="match status" value="1"/>
</dbReference>
<dbReference type="InterPro" id="IPR001133">
    <property type="entry name" value="NADH_UbQ_OxRdtase_chain4L/K"/>
</dbReference>
<dbReference type="InterPro" id="IPR039428">
    <property type="entry name" value="NUOK/Mnh_C1-like"/>
</dbReference>
<dbReference type="NCBIfam" id="NF004320">
    <property type="entry name" value="PRK05715.1-2"/>
    <property type="match status" value="1"/>
</dbReference>
<dbReference type="NCBIfam" id="NF004321">
    <property type="entry name" value="PRK05715.1-3"/>
    <property type="match status" value="1"/>
</dbReference>
<dbReference type="NCBIfam" id="NF004323">
    <property type="entry name" value="PRK05715.1-5"/>
    <property type="match status" value="1"/>
</dbReference>
<dbReference type="PANTHER" id="PTHR11434:SF21">
    <property type="entry name" value="NADH DEHYDROGENASE SUBUNIT 4L-RELATED"/>
    <property type="match status" value="1"/>
</dbReference>
<dbReference type="PANTHER" id="PTHR11434">
    <property type="entry name" value="NADH-UBIQUINONE OXIDOREDUCTASE SUBUNIT ND4L"/>
    <property type="match status" value="1"/>
</dbReference>
<dbReference type="Pfam" id="PF00420">
    <property type="entry name" value="Oxidored_q2"/>
    <property type="match status" value="1"/>
</dbReference>
<comment type="function">
    <text evidence="1">NDH-1 shuttles electrons from NADH, via FMN and iron-sulfur (Fe-S) centers, to quinones in the respiratory chain. The immediate electron acceptor for the enzyme in this species is believed to be ubiquinone. Couples the redox reaction to proton translocation (for every two electrons transferred, four hydrogen ions are translocated across the cytoplasmic membrane), and thus conserves the redox energy in a proton gradient.</text>
</comment>
<comment type="catalytic activity">
    <reaction evidence="1">
        <text>a quinone + NADH + 5 H(+)(in) = a quinol + NAD(+) + 4 H(+)(out)</text>
        <dbReference type="Rhea" id="RHEA:57888"/>
        <dbReference type="ChEBI" id="CHEBI:15378"/>
        <dbReference type="ChEBI" id="CHEBI:24646"/>
        <dbReference type="ChEBI" id="CHEBI:57540"/>
        <dbReference type="ChEBI" id="CHEBI:57945"/>
        <dbReference type="ChEBI" id="CHEBI:132124"/>
    </reaction>
</comment>
<comment type="subunit">
    <text evidence="1">NDH-1 is composed of 14 different subunits. Subunits NuoA, H, J, K, L, M, N constitute the membrane sector of the complex.</text>
</comment>
<comment type="subcellular location">
    <subcellularLocation>
        <location evidence="1">Cell inner membrane</location>
        <topology evidence="1">Multi-pass membrane protein</topology>
    </subcellularLocation>
</comment>
<comment type="similarity">
    <text evidence="1">Belongs to the complex I subunit 4L family.</text>
</comment>
<evidence type="ECO:0000255" key="1">
    <source>
        <dbReference type="HAMAP-Rule" id="MF_01456"/>
    </source>
</evidence>
<gene>
    <name evidence="1" type="primary">nuoK</name>
    <name type="ordered locus">LPC_3065</name>
</gene>
<organism>
    <name type="scientific">Legionella pneumophila (strain Corby)</name>
    <dbReference type="NCBI Taxonomy" id="400673"/>
    <lineage>
        <taxon>Bacteria</taxon>
        <taxon>Pseudomonadati</taxon>
        <taxon>Pseudomonadota</taxon>
        <taxon>Gammaproteobacteria</taxon>
        <taxon>Legionellales</taxon>
        <taxon>Legionellaceae</taxon>
        <taxon>Legionella</taxon>
    </lineage>
</organism>
<reference key="1">
    <citation type="submission" date="2006-11" db="EMBL/GenBank/DDBJ databases">
        <title>Identification and characterization of a new conjugation/ type IVA secretion system (trb/tra) of L. pneumophila Corby localized on a mobile genomic island.</title>
        <authorList>
            <person name="Gloeckner G."/>
            <person name="Albert-Weissenberger C."/>
            <person name="Weinmann E."/>
            <person name="Jacobi S."/>
            <person name="Schunder E."/>
            <person name="Steinert M."/>
            <person name="Buchrieser C."/>
            <person name="Hacker J."/>
            <person name="Heuner K."/>
        </authorList>
    </citation>
    <scope>NUCLEOTIDE SEQUENCE [LARGE SCALE GENOMIC DNA]</scope>
    <source>
        <strain>Corby</strain>
    </source>
</reference>
<sequence>MIPVYDYLVLGVILFGLSLVGIMLNRKNIILLLVCVELMLLAVNTNFIAFSHYYNEVGGQVFVFFILTVAAAEAAIGLAIVMLLYRNRGNIDVDKMNHLKG</sequence>